<organism>
    <name type="scientific">Saccharolobus solfataricus (strain ATCC 35092 / DSM 1617 / JCM 11322 / P2)</name>
    <name type="common">Sulfolobus solfataricus</name>
    <dbReference type="NCBI Taxonomy" id="273057"/>
    <lineage>
        <taxon>Archaea</taxon>
        <taxon>Thermoproteota</taxon>
        <taxon>Thermoprotei</taxon>
        <taxon>Sulfolobales</taxon>
        <taxon>Sulfolobaceae</taxon>
        <taxon>Saccharolobus</taxon>
    </lineage>
</organism>
<name>Y942_SACS2</name>
<keyword id="KW-0238">DNA-binding</keyword>
<keyword id="KW-1185">Reference proteome</keyword>
<keyword id="KW-0804">Transcription</keyword>
<keyword id="KW-0805">Transcription regulation</keyword>
<proteinExistence type="inferred from homology"/>
<dbReference type="EMBL" id="AE006641">
    <property type="protein sequence ID" value="AAK41218.1"/>
    <property type="molecule type" value="Genomic_DNA"/>
</dbReference>
<dbReference type="PIR" id="C90245">
    <property type="entry name" value="C90245"/>
</dbReference>
<dbReference type="RefSeq" id="WP_009992376.1">
    <property type="nucleotide sequence ID" value="NC_002754.1"/>
</dbReference>
<dbReference type="SMR" id="Q97ZH1"/>
<dbReference type="FunCoup" id="Q97ZH1">
    <property type="interactions" value="1"/>
</dbReference>
<dbReference type="STRING" id="273057.SSO0942"/>
<dbReference type="PaxDb" id="273057-SSO0942"/>
<dbReference type="EnsemblBacteria" id="AAK41218">
    <property type="protein sequence ID" value="AAK41218"/>
    <property type="gene ID" value="SSO0942"/>
</dbReference>
<dbReference type="KEGG" id="sso:SSO0942"/>
<dbReference type="PATRIC" id="fig|273057.12.peg.938"/>
<dbReference type="eggNOG" id="arCOG04152">
    <property type="taxonomic scope" value="Archaea"/>
</dbReference>
<dbReference type="HOGENOM" id="CLU_075726_1_0_2"/>
<dbReference type="InParanoid" id="Q97ZH1"/>
<dbReference type="PhylomeDB" id="Q97ZH1"/>
<dbReference type="Proteomes" id="UP000001974">
    <property type="component" value="Chromosome"/>
</dbReference>
<dbReference type="GO" id="GO:0003677">
    <property type="term" value="F:DNA binding"/>
    <property type="evidence" value="ECO:0007669"/>
    <property type="project" value="UniProtKB-KW"/>
</dbReference>
<dbReference type="GO" id="GO:0003700">
    <property type="term" value="F:DNA-binding transcription factor activity"/>
    <property type="evidence" value="ECO:0007669"/>
    <property type="project" value="UniProtKB-UniRule"/>
</dbReference>
<dbReference type="CDD" id="cd00093">
    <property type="entry name" value="HTH_XRE"/>
    <property type="match status" value="1"/>
</dbReference>
<dbReference type="Gene3D" id="1.10.260.40">
    <property type="entry name" value="lambda repressor-like DNA-binding domains"/>
    <property type="match status" value="1"/>
</dbReference>
<dbReference type="HAMAP" id="MF_00584">
    <property type="entry name" value="HTH_type_cro_C1"/>
    <property type="match status" value="1"/>
</dbReference>
<dbReference type="InterPro" id="IPR020886">
    <property type="entry name" value="Arc_TR_HTH"/>
</dbReference>
<dbReference type="InterPro" id="IPR001387">
    <property type="entry name" value="Cro/C1-type_HTH"/>
</dbReference>
<dbReference type="InterPro" id="IPR010982">
    <property type="entry name" value="Lambda_DNA-bd_dom_sf"/>
</dbReference>
<dbReference type="Pfam" id="PF01381">
    <property type="entry name" value="HTH_3"/>
    <property type="match status" value="1"/>
</dbReference>
<dbReference type="SMART" id="SM00530">
    <property type="entry name" value="HTH_XRE"/>
    <property type="match status" value="1"/>
</dbReference>
<dbReference type="SUPFAM" id="SSF47413">
    <property type="entry name" value="lambda repressor-like DNA-binding domains"/>
    <property type="match status" value="1"/>
</dbReference>
<dbReference type="PROSITE" id="PS50943">
    <property type="entry name" value="HTH_CROC1"/>
    <property type="match status" value="1"/>
</dbReference>
<protein>
    <recommendedName>
        <fullName evidence="1">Putative HTH-type transcriptional regulatory protein SSO0942</fullName>
    </recommendedName>
</protein>
<accession>Q97ZH1</accession>
<gene>
    <name type="ordered locus">SSO0942</name>
</gene>
<sequence>MSKKIIDEVIDILEDKKYTYTMIEYPEHNRKSVDIVLNSKEPTLIRVSEDKITKEEISDLKKIAVSTLTASLVVTNEEEEDIVSVKADNVFAISPEGFKKVINGEKIFLYRTRGGIFIKIRNYILKHKREEMGYSIGDVAKFLGVSRKAIYDYEKGDSDVSLEVAEKLIDLFGDDIIGDVIWDSIKSKKEILEEGVAEFSPENFKAKLIYKLKESGLNALSLKLTAADLIVKDSDNNRYLVTIENKDYNKSMKKFYEAKKLASYTKSELVIIIRTSKMLKECEDLGYKTYEENDIHSLIDEIKGSNGRQG</sequence>
<reference key="1">
    <citation type="journal article" date="2001" name="Proc. Natl. Acad. Sci. U.S.A.">
        <title>The complete genome of the crenarchaeon Sulfolobus solfataricus P2.</title>
        <authorList>
            <person name="She Q."/>
            <person name="Singh R.K."/>
            <person name="Confalonieri F."/>
            <person name="Zivanovic Y."/>
            <person name="Allard G."/>
            <person name="Awayez M.J."/>
            <person name="Chan-Weiher C.C.-Y."/>
            <person name="Clausen I.G."/>
            <person name="Curtis B.A."/>
            <person name="De Moors A."/>
            <person name="Erauso G."/>
            <person name="Fletcher C."/>
            <person name="Gordon P.M.K."/>
            <person name="Heikamp-de Jong I."/>
            <person name="Jeffries A.C."/>
            <person name="Kozera C.J."/>
            <person name="Medina N."/>
            <person name="Peng X."/>
            <person name="Thi-Ngoc H.P."/>
            <person name="Redder P."/>
            <person name="Schenk M.E."/>
            <person name="Theriault C."/>
            <person name="Tolstrup N."/>
            <person name="Charlebois R.L."/>
            <person name="Doolittle W.F."/>
            <person name="Duguet M."/>
            <person name="Gaasterland T."/>
            <person name="Garrett R.A."/>
            <person name="Ragan M.A."/>
            <person name="Sensen C.W."/>
            <person name="Van der Oost J."/>
        </authorList>
    </citation>
    <scope>NUCLEOTIDE SEQUENCE [LARGE SCALE GENOMIC DNA]</scope>
    <source>
        <strain>ATCC 35092 / DSM 1617 / JCM 11322 / P2</strain>
    </source>
</reference>
<feature type="chain" id="PRO_0000144866" description="Putative HTH-type transcriptional regulatory protein SSO0942">
    <location>
        <begin position="1"/>
        <end position="310"/>
    </location>
</feature>
<feature type="domain" description="HTH cro/C1-type" evidence="1">
    <location>
        <begin position="125"/>
        <end position="180"/>
    </location>
</feature>
<feature type="DNA-binding region" description="H-T-H motif" evidence="1">
    <location>
        <begin position="136"/>
        <end position="155"/>
    </location>
</feature>
<evidence type="ECO:0000255" key="1">
    <source>
        <dbReference type="HAMAP-Rule" id="MF_00584"/>
    </source>
</evidence>